<organism>
    <name type="scientific">Bacillus cereus (strain Q1)</name>
    <dbReference type="NCBI Taxonomy" id="361100"/>
    <lineage>
        <taxon>Bacteria</taxon>
        <taxon>Bacillati</taxon>
        <taxon>Bacillota</taxon>
        <taxon>Bacilli</taxon>
        <taxon>Bacillales</taxon>
        <taxon>Bacillaceae</taxon>
        <taxon>Bacillus</taxon>
        <taxon>Bacillus cereus group</taxon>
    </lineage>
</organism>
<name>ACCD_BACCQ</name>
<reference key="1">
    <citation type="journal article" date="2009" name="J. Bacteriol.">
        <title>Complete genome sequence of the extremophilic Bacillus cereus strain Q1 with industrial applications.</title>
        <authorList>
            <person name="Xiong Z."/>
            <person name="Jiang Y."/>
            <person name="Qi D."/>
            <person name="Lu H."/>
            <person name="Yang F."/>
            <person name="Yang J."/>
            <person name="Chen L."/>
            <person name="Sun L."/>
            <person name="Xu X."/>
            <person name="Xue Y."/>
            <person name="Zhu Y."/>
            <person name="Jin Q."/>
        </authorList>
    </citation>
    <scope>NUCLEOTIDE SEQUENCE [LARGE SCALE GENOMIC DNA]</scope>
    <source>
        <strain>Q1</strain>
    </source>
</reference>
<gene>
    <name evidence="1" type="primary">accD</name>
    <name type="ordered locus">BCQ_4405</name>
</gene>
<accession>B9J0A1</accession>
<proteinExistence type="inferred from homology"/>
<comment type="function">
    <text evidence="1">Component of the acetyl coenzyme A carboxylase (ACC) complex. Biotin carboxylase (BC) catalyzes the carboxylation of biotin on its carrier protein (BCCP) and then the CO(2) group is transferred by the transcarboxylase to acetyl-CoA to form malonyl-CoA.</text>
</comment>
<comment type="catalytic activity">
    <reaction evidence="1">
        <text>N(6)-carboxybiotinyl-L-lysyl-[protein] + acetyl-CoA = N(6)-biotinyl-L-lysyl-[protein] + malonyl-CoA</text>
        <dbReference type="Rhea" id="RHEA:54728"/>
        <dbReference type="Rhea" id="RHEA-COMP:10505"/>
        <dbReference type="Rhea" id="RHEA-COMP:10506"/>
        <dbReference type="ChEBI" id="CHEBI:57288"/>
        <dbReference type="ChEBI" id="CHEBI:57384"/>
        <dbReference type="ChEBI" id="CHEBI:83144"/>
        <dbReference type="ChEBI" id="CHEBI:83145"/>
        <dbReference type="EC" id="2.1.3.15"/>
    </reaction>
</comment>
<comment type="cofactor">
    <cofactor evidence="1">
        <name>Zn(2+)</name>
        <dbReference type="ChEBI" id="CHEBI:29105"/>
    </cofactor>
    <text evidence="1">Binds 1 zinc ion per subunit.</text>
</comment>
<comment type="pathway">
    <text evidence="1">Lipid metabolism; malonyl-CoA biosynthesis; malonyl-CoA from acetyl-CoA: step 1/1.</text>
</comment>
<comment type="subunit">
    <text evidence="1">Acetyl-CoA carboxylase is a heterohexamer composed of biotin carboxyl carrier protein (AccB), biotin carboxylase (AccC) and two subunits each of ACCase subunit alpha (AccA) and ACCase subunit beta (AccD).</text>
</comment>
<comment type="subcellular location">
    <subcellularLocation>
        <location evidence="1">Cytoplasm</location>
    </subcellularLocation>
</comment>
<comment type="similarity">
    <text evidence="1">Belongs to the AccD/PCCB family.</text>
</comment>
<dbReference type="EC" id="2.1.3.15" evidence="1"/>
<dbReference type="EMBL" id="CP000227">
    <property type="protein sequence ID" value="ACM14831.1"/>
    <property type="molecule type" value="Genomic_DNA"/>
</dbReference>
<dbReference type="SMR" id="B9J0A1"/>
<dbReference type="KEGG" id="bcq:BCQ_4405"/>
<dbReference type="HOGENOM" id="CLU_015486_1_1_9"/>
<dbReference type="UniPathway" id="UPA00655">
    <property type="reaction ID" value="UER00711"/>
</dbReference>
<dbReference type="Proteomes" id="UP000000441">
    <property type="component" value="Chromosome"/>
</dbReference>
<dbReference type="GO" id="GO:0009317">
    <property type="term" value="C:acetyl-CoA carboxylase complex"/>
    <property type="evidence" value="ECO:0007669"/>
    <property type="project" value="InterPro"/>
</dbReference>
<dbReference type="GO" id="GO:0003989">
    <property type="term" value="F:acetyl-CoA carboxylase activity"/>
    <property type="evidence" value="ECO:0007669"/>
    <property type="project" value="InterPro"/>
</dbReference>
<dbReference type="GO" id="GO:0005524">
    <property type="term" value="F:ATP binding"/>
    <property type="evidence" value="ECO:0007669"/>
    <property type="project" value="UniProtKB-KW"/>
</dbReference>
<dbReference type="GO" id="GO:0016743">
    <property type="term" value="F:carboxyl- or carbamoyltransferase activity"/>
    <property type="evidence" value="ECO:0007669"/>
    <property type="project" value="UniProtKB-UniRule"/>
</dbReference>
<dbReference type="GO" id="GO:0008270">
    <property type="term" value="F:zinc ion binding"/>
    <property type="evidence" value="ECO:0007669"/>
    <property type="project" value="UniProtKB-UniRule"/>
</dbReference>
<dbReference type="GO" id="GO:0006633">
    <property type="term" value="P:fatty acid biosynthetic process"/>
    <property type="evidence" value="ECO:0007669"/>
    <property type="project" value="UniProtKB-KW"/>
</dbReference>
<dbReference type="GO" id="GO:2001295">
    <property type="term" value="P:malonyl-CoA biosynthetic process"/>
    <property type="evidence" value="ECO:0007669"/>
    <property type="project" value="UniProtKB-UniRule"/>
</dbReference>
<dbReference type="Gene3D" id="3.90.226.10">
    <property type="entry name" value="2-enoyl-CoA Hydratase, Chain A, domain 1"/>
    <property type="match status" value="1"/>
</dbReference>
<dbReference type="HAMAP" id="MF_01395">
    <property type="entry name" value="AcetylCoA_CT_beta"/>
    <property type="match status" value="1"/>
</dbReference>
<dbReference type="InterPro" id="IPR034733">
    <property type="entry name" value="AcCoA_carboxyl_beta"/>
</dbReference>
<dbReference type="InterPro" id="IPR000438">
    <property type="entry name" value="Acetyl_CoA_COase_Trfase_b_su"/>
</dbReference>
<dbReference type="InterPro" id="IPR029045">
    <property type="entry name" value="ClpP/crotonase-like_dom_sf"/>
</dbReference>
<dbReference type="InterPro" id="IPR011762">
    <property type="entry name" value="COA_CT_N"/>
</dbReference>
<dbReference type="InterPro" id="IPR041010">
    <property type="entry name" value="Znf-ACC"/>
</dbReference>
<dbReference type="NCBIfam" id="TIGR00515">
    <property type="entry name" value="accD"/>
    <property type="match status" value="1"/>
</dbReference>
<dbReference type="PANTHER" id="PTHR42995">
    <property type="entry name" value="ACETYL-COENZYME A CARBOXYLASE CARBOXYL TRANSFERASE SUBUNIT BETA, CHLOROPLASTIC"/>
    <property type="match status" value="1"/>
</dbReference>
<dbReference type="PANTHER" id="PTHR42995:SF5">
    <property type="entry name" value="ACETYL-COENZYME A CARBOXYLASE CARBOXYL TRANSFERASE SUBUNIT BETA, CHLOROPLASTIC"/>
    <property type="match status" value="1"/>
</dbReference>
<dbReference type="Pfam" id="PF01039">
    <property type="entry name" value="Carboxyl_trans"/>
    <property type="match status" value="1"/>
</dbReference>
<dbReference type="Pfam" id="PF17848">
    <property type="entry name" value="Zn_ribbon_ACC"/>
    <property type="match status" value="1"/>
</dbReference>
<dbReference type="PRINTS" id="PR01070">
    <property type="entry name" value="ACCCTRFRASEB"/>
</dbReference>
<dbReference type="SUPFAM" id="SSF52096">
    <property type="entry name" value="ClpP/crotonase"/>
    <property type="match status" value="1"/>
</dbReference>
<dbReference type="PROSITE" id="PS50980">
    <property type="entry name" value="COA_CT_NTER"/>
    <property type="match status" value="1"/>
</dbReference>
<sequence length="289" mass="32282">MLRDLFVKKKKYAAIPSEQVRKDVPDGVMTKCPKCKKIMYTKELLKNLKVCVNCGYHHPMNAWERLDSILDEGSFREYDKEMVSLNPLEFPDYEEKLESDRKKTDLNEAVVTGEGTIDDMLVVVAVMDSRFRMGSMGSVVGEKIARAVEKAYDLQVPFIIFTASGGARMQEGILSLMQMAKTSVALKKHSNAGGLFISVMTHPTTGGVSASFASLGDYNLAEPGALIGFAGRRVIEQTVREKLPEDFQTAEFLLEHGQLDAVVHRDDMRESLRKILEVHQGGEMAVWQS</sequence>
<protein>
    <recommendedName>
        <fullName evidence="1">Acetyl-coenzyme A carboxylase carboxyl transferase subunit beta</fullName>
        <shortName evidence="1">ACCase subunit beta</shortName>
        <shortName evidence="1">Acetyl-CoA carboxylase carboxyltransferase subunit beta</shortName>
        <ecNumber evidence="1">2.1.3.15</ecNumber>
    </recommendedName>
</protein>
<feature type="chain" id="PRO_0000389679" description="Acetyl-coenzyme A carboxylase carboxyl transferase subunit beta">
    <location>
        <begin position="1"/>
        <end position="289"/>
    </location>
</feature>
<feature type="domain" description="CoA carboxyltransferase N-terminal" evidence="2">
    <location>
        <begin position="28"/>
        <end position="289"/>
    </location>
</feature>
<feature type="zinc finger region" description="C4-type" evidence="1">
    <location>
        <begin position="32"/>
        <end position="54"/>
    </location>
</feature>
<feature type="binding site" evidence="1">
    <location>
        <position position="32"/>
    </location>
    <ligand>
        <name>Zn(2+)</name>
        <dbReference type="ChEBI" id="CHEBI:29105"/>
    </ligand>
</feature>
<feature type="binding site" evidence="1">
    <location>
        <position position="35"/>
    </location>
    <ligand>
        <name>Zn(2+)</name>
        <dbReference type="ChEBI" id="CHEBI:29105"/>
    </ligand>
</feature>
<feature type="binding site" evidence="1">
    <location>
        <position position="51"/>
    </location>
    <ligand>
        <name>Zn(2+)</name>
        <dbReference type="ChEBI" id="CHEBI:29105"/>
    </ligand>
</feature>
<feature type="binding site" evidence="1">
    <location>
        <position position="54"/>
    </location>
    <ligand>
        <name>Zn(2+)</name>
        <dbReference type="ChEBI" id="CHEBI:29105"/>
    </ligand>
</feature>
<evidence type="ECO:0000255" key="1">
    <source>
        <dbReference type="HAMAP-Rule" id="MF_01395"/>
    </source>
</evidence>
<evidence type="ECO:0000255" key="2">
    <source>
        <dbReference type="PROSITE-ProRule" id="PRU01136"/>
    </source>
</evidence>
<keyword id="KW-0067">ATP-binding</keyword>
<keyword id="KW-0963">Cytoplasm</keyword>
<keyword id="KW-0275">Fatty acid biosynthesis</keyword>
<keyword id="KW-0276">Fatty acid metabolism</keyword>
<keyword id="KW-0444">Lipid biosynthesis</keyword>
<keyword id="KW-0443">Lipid metabolism</keyword>
<keyword id="KW-0479">Metal-binding</keyword>
<keyword id="KW-0547">Nucleotide-binding</keyword>
<keyword id="KW-0808">Transferase</keyword>
<keyword id="KW-0862">Zinc</keyword>
<keyword id="KW-0863">Zinc-finger</keyword>